<organism>
    <name type="scientific">Haemophilus influenzae (strain PittEE)</name>
    <dbReference type="NCBI Taxonomy" id="374930"/>
    <lineage>
        <taxon>Bacteria</taxon>
        <taxon>Pseudomonadati</taxon>
        <taxon>Pseudomonadota</taxon>
        <taxon>Gammaproteobacteria</taxon>
        <taxon>Pasteurellales</taxon>
        <taxon>Pasteurellaceae</taxon>
        <taxon>Haemophilus</taxon>
    </lineage>
</organism>
<feature type="chain" id="PRO_1000100121" description="Shikimate dehydrogenase (NADP(+))">
    <location>
        <begin position="1"/>
        <end position="268"/>
    </location>
</feature>
<feature type="active site" description="Proton acceptor" evidence="1">
    <location>
        <position position="65"/>
    </location>
</feature>
<feature type="binding site" evidence="1">
    <location>
        <begin position="14"/>
        <end position="16"/>
    </location>
    <ligand>
        <name>shikimate</name>
        <dbReference type="ChEBI" id="CHEBI:36208"/>
    </ligand>
</feature>
<feature type="binding site" evidence="1">
    <location>
        <position position="61"/>
    </location>
    <ligand>
        <name>shikimate</name>
        <dbReference type="ChEBI" id="CHEBI:36208"/>
    </ligand>
</feature>
<feature type="binding site" evidence="1">
    <location>
        <position position="86"/>
    </location>
    <ligand>
        <name>shikimate</name>
        <dbReference type="ChEBI" id="CHEBI:36208"/>
    </ligand>
</feature>
<feature type="binding site" evidence="1">
    <location>
        <position position="102"/>
    </location>
    <ligand>
        <name>shikimate</name>
        <dbReference type="ChEBI" id="CHEBI:36208"/>
    </ligand>
</feature>
<feature type="binding site" evidence="1">
    <location>
        <begin position="126"/>
        <end position="130"/>
    </location>
    <ligand>
        <name>NADP(+)</name>
        <dbReference type="ChEBI" id="CHEBI:58349"/>
    </ligand>
</feature>
<feature type="binding site" evidence="1">
    <location>
        <begin position="149"/>
        <end position="154"/>
    </location>
    <ligand>
        <name>NADP(+)</name>
        <dbReference type="ChEBI" id="CHEBI:58349"/>
    </ligand>
</feature>
<feature type="binding site" evidence="1">
    <location>
        <position position="213"/>
    </location>
    <ligand>
        <name>NADP(+)</name>
        <dbReference type="ChEBI" id="CHEBI:58349"/>
    </ligand>
</feature>
<feature type="binding site" evidence="1">
    <location>
        <position position="215"/>
    </location>
    <ligand>
        <name>shikimate</name>
        <dbReference type="ChEBI" id="CHEBI:36208"/>
    </ligand>
</feature>
<feature type="binding site" evidence="1">
    <location>
        <position position="238"/>
    </location>
    <ligand>
        <name>NADP(+)</name>
        <dbReference type="ChEBI" id="CHEBI:58349"/>
    </ligand>
</feature>
<proteinExistence type="inferred from homology"/>
<sequence>MDLYAVWGNPITQSKSPLIQNKLAAQTHQTMEYIAKLGNLDSFEQQLLAFFEGGAKGCNITSPFKERAYQLADEYSQRAKLAEACNTLKKLDDGKLYADNTDGIGLVTDLQRLNWLHPNQRILILGAGGATKGVLLPLLQAQQNIVLANRTFSKAKELAERFQPYGNIQAASMDSIPLQTYDVVINATSAGLSGGTAPVDAEILKLGSAFYDMQYAKGTDTPFIALCKSLGLTNVSDGFGMLVAQAAHSFHLWRGVMPDFVAVYEQLK</sequence>
<name>AROE_HAEIE</name>
<keyword id="KW-0028">Amino-acid biosynthesis</keyword>
<keyword id="KW-0057">Aromatic amino acid biosynthesis</keyword>
<keyword id="KW-0521">NADP</keyword>
<keyword id="KW-0560">Oxidoreductase</keyword>
<comment type="function">
    <text evidence="1">Involved in the biosynthesis of the chorismate, which leads to the biosynthesis of aromatic amino acids. Catalyzes the reversible NADPH linked reduction of 3-dehydroshikimate (DHSA) to yield shikimate (SA).</text>
</comment>
<comment type="catalytic activity">
    <reaction evidence="1">
        <text>shikimate + NADP(+) = 3-dehydroshikimate + NADPH + H(+)</text>
        <dbReference type="Rhea" id="RHEA:17737"/>
        <dbReference type="ChEBI" id="CHEBI:15378"/>
        <dbReference type="ChEBI" id="CHEBI:16630"/>
        <dbReference type="ChEBI" id="CHEBI:36208"/>
        <dbReference type="ChEBI" id="CHEBI:57783"/>
        <dbReference type="ChEBI" id="CHEBI:58349"/>
        <dbReference type="EC" id="1.1.1.25"/>
    </reaction>
</comment>
<comment type="pathway">
    <text evidence="1">Metabolic intermediate biosynthesis; chorismate biosynthesis; chorismate from D-erythrose 4-phosphate and phosphoenolpyruvate: step 4/7.</text>
</comment>
<comment type="subunit">
    <text evidence="1">Homodimer.</text>
</comment>
<comment type="similarity">
    <text evidence="1">Belongs to the shikimate dehydrogenase family.</text>
</comment>
<gene>
    <name evidence="1" type="primary">aroE</name>
    <name type="ordered locus">CGSHiEE_08920</name>
</gene>
<reference key="1">
    <citation type="journal article" date="2007" name="Genome Biol.">
        <title>Characterization and modeling of the Haemophilus influenzae core and supragenomes based on the complete genomic sequences of Rd and 12 clinical nontypeable strains.</title>
        <authorList>
            <person name="Hogg J.S."/>
            <person name="Hu F.Z."/>
            <person name="Janto B."/>
            <person name="Boissy R."/>
            <person name="Hayes J."/>
            <person name="Keefe R."/>
            <person name="Post J.C."/>
            <person name="Ehrlich G.D."/>
        </authorList>
    </citation>
    <scope>NUCLEOTIDE SEQUENCE [LARGE SCALE GENOMIC DNA]</scope>
    <source>
        <strain>PittEE</strain>
    </source>
</reference>
<protein>
    <recommendedName>
        <fullName evidence="1">Shikimate dehydrogenase (NADP(+))</fullName>
        <shortName evidence="1">SDH</shortName>
        <ecNumber evidence="1">1.1.1.25</ecNumber>
    </recommendedName>
</protein>
<evidence type="ECO:0000255" key="1">
    <source>
        <dbReference type="HAMAP-Rule" id="MF_00222"/>
    </source>
</evidence>
<dbReference type="EC" id="1.1.1.25" evidence="1"/>
<dbReference type="EMBL" id="CP000671">
    <property type="protein sequence ID" value="ABQ99079.1"/>
    <property type="molecule type" value="Genomic_DNA"/>
</dbReference>
<dbReference type="SMR" id="A5UE78"/>
<dbReference type="KEGG" id="hip:CGSHiEE_08920"/>
<dbReference type="HOGENOM" id="CLU_044063_2_1_6"/>
<dbReference type="UniPathway" id="UPA00053">
    <property type="reaction ID" value="UER00087"/>
</dbReference>
<dbReference type="GO" id="GO:0005829">
    <property type="term" value="C:cytosol"/>
    <property type="evidence" value="ECO:0007669"/>
    <property type="project" value="TreeGrafter"/>
</dbReference>
<dbReference type="GO" id="GO:0050661">
    <property type="term" value="F:NADP binding"/>
    <property type="evidence" value="ECO:0007669"/>
    <property type="project" value="InterPro"/>
</dbReference>
<dbReference type="GO" id="GO:0004764">
    <property type="term" value="F:shikimate 3-dehydrogenase (NADP+) activity"/>
    <property type="evidence" value="ECO:0007669"/>
    <property type="project" value="UniProtKB-UniRule"/>
</dbReference>
<dbReference type="GO" id="GO:0008652">
    <property type="term" value="P:amino acid biosynthetic process"/>
    <property type="evidence" value="ECO:0007669"/>
    <property type="project" value="UniProtKB-KW"/>
</dbReference>
<dbReference type="GO" id="GO:0009073">
    <property type="term" value="P:aromatic amino acid family biosynthetic process"/>
    <property type="evidence" value="ECO:0007669"/>
    <property type="project" value="UniProtKB-KW"/>
</dbReference>
<dbReference type="GO" id="GO:0009423">
    <property type="term" value="P:chorismate biosynthetic process"/>
    <property type="evidence" value="ECO:0007669"/>
    <property type="project" value="UniProtKB-UniRule"/>
</dbReference>
<dbReference type="GO" id="GO:0019632">
    <property type="term" value="P:shikimate metabolic process"/>
    <property type="evidence" value="ECO:0007669"/>
    <property type="project" value="InterPro"/>
</dbReference>
<dbReference type="CDD" id="cd01065">
    <property type="entry name" value="NAD_bind_Shikimate_DH"/>
    <property type="match status" value="1"/>
</dbReference>
<dbReference type="FunFam" id="3.40.50.10860:FF:000006">
    <property type="entry name" value="Shikimate dehydrogenase (NADP(+))"/>
    <property type="match status" value="1"/>
</dbReference>
<dbReference type="FunFam" id="3.40.50.720:FF:000965">
    <property type="entry name" value="Shikimate dehydrogenase (NADP(+))"/>
    <property type="match status" value="1"/>
</dbReference>
<dbReference type="Gene3D" id="3.40.50.10860">
    <property type="entry name" value="Leucine Dehydrogenase, chain A, domain 1"/>
    <property type="match status" value="1"/>
</dbReference>
<dbReference type="Gene3D" id="3.40.50.720">
    <property type="entry name" value="NAD(P)-binding Rossmann-like Domain"/>
    <property type="match status" value="1"/>
</dbReference>
<dbReference type="HAMAP" id="MF_00222">
    <property type="entry name" value="Shikimate_DH_AroE"/>
    <property type="match status" value="1"/>
</dbReference>
<dbReference type="InterPro" id="IPR046346">
    <property type="entry name" value="Aminoacid_DH-like_N_sf"/>
</dbReference>
<dbReference type="InterPro" id="IPR036291">
    <property type="entry name" value="NAD(P)-bd_dom_sf"/>
</dbReference>
<dbReference type="InterPro" id="IPR041121">
    <property type="entry name" value="SDH_C"/>
</dbReference>
<dbReference type="InterPro" id="IPR011342">
    <property type="entry name" value="Shikimate_DH"/>
</dbReference>
<dbReference type="InterPro" id="IPR013708">
    <property type="entry name" value="Shikimate_DH-bd_N"/>
</dbReference>
<dbReference type="InterPro" id="IPR022893">
    <property type="entry name" value="Shikimate_DH_fam"/>
</dbReference>
<dbReference type="InterPro" id="IPR006151">
    <property type="entry name" value="Shikm_DH/Glu-tRNA_Rdtase"/>
</dbReference>
<dbReference type="NCBIfam" id="TIGR00507">
    <property type="entry name" value="aroE"/>
    <property type="match status" value="1"/>
</dbReference>
<dbReference type="NCBIfam" id="NF001310">
    <property type="entry name" value="PRK00258.1-2"/>
    <property type="match status" value="1"/>
</dbReference>
<dbReference type="PANTHER" id="PTHR21089:SF1">
    <property type="entry name" value="BIFUNCTIONAL 3-DEHYDROQUINATE DEHYDRATASE_SHIKIMATE DEHYDROGENASE, CHLOROPLASTIC"/>
    <property type="match status" value="1"/>
</dbReference>
<dbReference type="PANTHER" id="PTHR21089">
    <property type="entry name" value="SHIKIMATE DEHYDROGENASE"/>
    <property type="match status" value="1"/>
</dbReference>
<dbReference type="Pfam" id="PF18317">
    <property type="entry name" value="SDH_C"/>
    <property type="match status" value="1"/>
</dbReference>
<dbReference type="Pfam" id="PF01488">
    <property type="entry name" value="Shikimate_DH"/>
    <property type="match status" value="1"/>
</dbReference>
<dbReference type="Pfam" id="PF08501">
    <property type="entry name" value="Shikimate_dh_N"/>
    <property type="match status" value="1"/>
</dbReference>
<dbReference type="SUPFAM" id="SSF53223">
    <property type="entry name" value="Aminoacid dehydrogenase-like, N-terminal domain"/>
    <property type="match status" value="1"/>
</dbReference>
<dbReference type="SUPFAM" id="SSF51735">
    <property type="entry name" value="NAD(P)-binding Rossmann-fold domains"/>
    <property type="match status" value="1"/>
</dbReference>
<accession>A5UE78</accession>